<comment type="function">
    <text evidence="1">This protein is one of the two subunits of integration host factor, a specific DNA-binding protein that functions in genetic recombination as well as in transcriptional and translational control.</text>
</comment>
<comment type="subunit">
    <text evidence="1">Heterodimer of an alpha and a beta chain.</text>
</comment>
<comment type="similarity">
    <text evidence="1">Belongs to the bacterial histone-like protein family.</text>
</comment>
<protein>
    <recommendedName>
        <fullName evidence="1">Integration host factor subunit beta</fullName>
        <shortName evidence="1">IHF-beta</shortName>
    </recommendedName>
</protein>
<accession>Q3IL99</accession>
<gene>
    <name evidence="1" type="primary">ihfB</name>
    <name evidence="1" type="synonym">himD</name>
    <name type="ordered locus">PSHAa1426</name>
</gene>
<evidence type="ECO:0000255" key="1">
    <source>
        <dbReference type="HAMAP-Rule" id="MF_00381"/>
    </source>
</evidence>
<evidence type="ECO:0000256" key="2">
    <source>
        <dbReference type="SAM" id="MobiDB-lite"/>
    </source>
</evidence>
<reference key="1">
    <citation type="journal article" date="2005" name="Genome Res.">
        <title>Coping with cold: the genome of the versatile marine Antarctica bacterium Pseudoalteromonas haloplanktis TAC125.</title>
        <authorList>
            <person name="Medigue C."/>
            <person name="Krin E."/>
            <person name="Pascal G."/>
            <person name="Barbe V."/>
            <person name="Bernsel A."/>
            <person name="Bertin P.N."/>
            <person name="Cheung F."/>
            <person name="Cruveiller S."/>
            <person name="D'Amico S."/>
            <person name="Duilio A."/>
            <person name="Fang G."/>
            <person name="Feller G."/>
            <person name="Ho C."/>
            <person name="Mangenot S."/>
            <person name="Marino G."/>
            <person name="Nilsson J."/>
            <person name="Parrilli E."/>
            <person name="Rocha E.P.C."/>
            <person name="Rouy Z."/>
            <person name="Sekowska A."/>
            <person name="Tutino M.L."/>
            <person name="Vallenet D."/>
            <person name="von Heijne G."/>
            <person name="Danchin A."/>
        </authorList>
    </citation>
    <scope>NUCLEOTIDE SEQUENCE [LARGE SCALE GENOMIC DNA]</scope>
    <source>
        <strain>TAC 125</strain>
    </source>
</reference>
<feature type="chain" id="PRO_1000060633" description="Integration host factor subunit beta">
    <location>
        <begin position="1"/>
        <end position="95"/>
    </location>
</feature>
<feature type="region of interest" description="Disordered" evidence="2">
    <location>
        <begin position="56"/>
        <end position="95"/>
    </location>
</feature>
<feature type="compositionally biased region" description="Basic and acidic residues" evidence="2">
    <location>
        <begin position="72"/>
        <end position="95"/>
    </location>
</feature>
<proteinExistence type="inferred from homology"/>
<sequence>MTKSELIETLAQQHAHVPVKDVENAVKEILEQMAGSLSSSDRIEIRGFGSFSLHYRAPRTGRNPKTGETVELDGKHVPHFKPGKELRDRVNESIA</sequence>
<name>IHFB_PSET1</name>
<organism>
    <name type="scientific">Pseudoalteromonas translucida (strain TAC 125)</name>
    <dbReference type="NCBI Taxonomy" id="326442"/>
    <lineage>
        <taxon>Bacteria</taxon>
        <taxon>Pseudomonadati</taxon>
        <taxon>Pseudomonadota</taxon>
        <taxon>Gammaproteobacteria</taxon>
        <taxon>Alteromonadales</taxon>
        <taxon>Pseudoalteromonadaceae</taxon>
        <taxon>Pseudoalteromonas</taxon>
    </lineage>
</organism>
<dbReference type="EMBL" id="CR954246">
    <property type="protein sequence ID" value="CAI86501.1"/>
    <property type="molecule type" value="Genomic_DNA"/>
</dbReference>
<dbReference type="SMR" id="Q3IL99"/>
<dbReference type="STRING" id="326442.PSHAa1426"/>
<dbReference type="KEGG" id="pha:PSHAa1426"/>
<dbReference type="eggNOG" id="COG0776">
    <property type="taxonomic scope" value="Bacteria"/>
</dbReference>
<dbReference type="HOGENOM" id="CLU_105066_2_0_6"/>
<dbReference type="BioCyc" id="PHAL326442:PSHA_RS07020-MONOMER"/>
<dbReference type="Proteomes" id="UP000006843">
    <property type="component" value="Chromosome I"/>
</dbReference>
<dbReference type="GO" id="GO:0005694">
    <property type="term" value="C:chromosome"/>
    <property type="evidence" value="ECO:0007669"/>
    <property type="project" value="InterPro"/>
</dbReference>
<dbReference type="GO" id="GO:0005829">
    <property type="term" value="C:cytosol"/>
    <property type="evidence" value="ECO:0007669"/>
    <property type="project" value="TreeGrafter"/>
</dbReference>
<dbReference type="GO" id="GO:0003677">
    <property type="term" value="F:DNA binding"/>
    <property type="evidence" value="ECO:0007669"/>
    <property type="project" value="UniProtKB-UniRule"/>
</dbReference>
<dbReference type="GO" id="GO:0030527">
    <property type="term" value="F:structural constituent of chromatin"/>
    <property type="evidence" value="ECO:0007669"/>
    <property type="project" value="InterPro"/>
</dbReference>
<dbReference type="GO" id="GO:0006310">
    <property type="term" value="P:DNA recombination"/>
    <property type="evidence" value="ECO:0007669"/>
    <property type="project" value="UniProtKB-UniRule"/>
</dbReference>
<dbReference type="GO" id="GO:0006355">
    <property type="term" value="P:regulation of DNA-templated transcription"/>
    <property type="evidence" value="ECO:0007669"/>
    <property type="project" value="UniProtKB-UniRule"/>
</dbReference>
<dbReference type="GO" id="GO:0006417">
    <property type="term" value="P:regulation of translation"/>
    <property type="evidence" value="ECO:0007669"/>
    <property type="project" value="UniProtKB-UniRule"/>
</dbReference>
<dbReference type="CDD" id="cd13836">
    <property type="entry name" value="IHF_B"/>
    <property type="match status" value="1"/>
</dbReference>
<dbReference type="FunFam" id="4.10.520.10:FF:000003">
    <property type="entry name" value="Integration host factor subunit beta"/>
    <property type="match status" value="1"/>
</dbReference>
<dbReference type="Gene3D" id="4.10.520.10">
    <property type="entry name" value="IHF-like DNA-binding proteins"/>
    <property type="match status" value="1"/>
</dbReference>
<dbReference type="HAMAP" id="MF_00381">
    <property type="entry name" value="IHF_beta"/>
    <property type="match status" value="1"/>
</dbReference>
<dbReference type="InterPro" id="IPR000119">
    <property type="entry name" value="Hist_DNA-bd"/>
</dbReference>
<dbReference type="InterPro" id="IPR020816">
    <property type="entry name" value="Histone-like_DNA-bd_CS"/>
</dbReference>
<dbReference type="InterPro" id="IPR010992">
    <property type="entry name" value="IHF-like_DNA-bd_dom_sf"/>
</dbReference>
<dbReference type="InterPro" id="IPR005685">
    <property type="entry name" value="IHF_beta"/>
</dbReference>
<dbReference type="NCBIfam" id="TIGR00988">
    <property type="entry name" value="hip"/>
    <property type="match status" value="1"/>
</dbReference>
<dbReference type="NCBIfam" id="NF001222">
    <property type="entry name" value="PRK00199.1"/>
    <property type="match status" value="1"/>
</dbReference>
<dbReference type="PANTHER" id="PTHR33175">
    <property type="entry name" value="DNA-BINDING PROTEIN HU"/>
    <property type="match status" value="1"/>
</dbReference>
<dbReference type="PANTHER" id="PTHR33175:SF5">
    <property type="entry name" value="INTEGRATION HOST FACTOR SUBUNIT BETA"/>
    <property type="match status" value="1"/>
</dbReference>
<dbReference type="Pfam" id="PF00216">
    <property type="entry name" value="Bac_DNA_binding"/>
    <property type="match status" value="1"/>
</dbReference>
<dbReference type="PRINTS" id="PR01727">
    <property type="entry name" value="DNABINDINGHU"/>
</dbReference>
<dbReference type="SMART" id="SM00411">
    <property type="entry name" value="BHL"/>
    <property type="match status" value="1"/>
</dbReference>
<dbReference type="SUPFAM" id="SSF47729">
    <property type="entry name" value="IHF-like DNA-binding proteins"/>
    <property type="match status" value="1"/>
</dbReference>
<dbReference type="PROSITE" id="PS00045">
    <property type="entry name" value="HISTONE_LIKE"/>
    <property type="match status" value="1"/>
</dbReference>
<keyword id="KW-0233">DNA recombination</keyword>
<keyword id="KW-0238">DNA-binding</keyword>
<keyword id="KW-1185">Reference proteome</keyword>
<keyword id="KW-0804">Transcription</keyword>
<keyword id="KW-0805">Transcription regulation</keyword>
<keyword id="KW-0810">Translation regulation</keyword>